<accession>C1FVU4</accession>
<dbReference type="EC" id="3.6.5.n1" evidence="1"/>
<dbReference type="EMBL" id="CP001581">
    <property type="protein sequence ID" value="ACO83998.1"/>
    <property type="molecule type" value="Genomic_DNA"/>
</dbReference>
<dbReference type="RefSeq" id="WP_012703991.1">
    <property type="nucleotide sequence ID" value="NC_012563.1"/>
</dbReference>
<dbReference type="SMR" id="C1FVU4"/>
<dbReference type="KEGG" id="cby:CLM_3358"/>
<dbReference type="eggNOG" id="COG0481">
    <property type="taxonomic scope" value="Bacteria"/>
</dbReference>
<dbReference type="HOGENOM" id="CLU_009995_3_3_9"/>
<dbReference type="Proteomes" id="UP000001374">
    <property type="component" value="Chromosome"/>
</dbReference>
<dbReference type="GO" id="GO:0005886">
    <property type="term" value="C:plasma membrane"/>
    <property type="evidence" value="ECO:0007669"/>
    <property type="project" value="UniProtKB-SubCell"/>
</dbReference>
<dbReference type="GO" id="GO:0005525">
    <property type="term" value="F:GTP binding"/>
    <property type="evidence" value="ECO:0007669"/>
    <property type="project" value="UniProtKB-UniRule"/>
</dbReference>
<dbReference type="GO" id="GO:0003924">
    <property type="term" value="F:GTPase activity"/>
    <property type="evidence" value="ECO:0007669"/>
    <property type="project" value="UniProtKB-UniRule"/>
</dbReference>
<dbReference type="GO" id="GO:0043022">
    <property type="term" value="F:ribosome binding"/>
    <property type="evidence" value="ECO:0007669"/>
    <property type="project" value="UniProtKB-UniRule"/>
</dbReference>
<dbReference type="GO" id="GO:0003746">
    <property type="term" value="F:translation elongation factor activity"/>
    <property type="evidence" value="ECO:0007669"/>
    <property type="project" value="UniProtKB-UniRule"/>
</dbReference>
<dbReference type="GO" id="GO:0045727">
    <property type="term" value="P:positive regulation of translation"/>
    <property type="evidence" value="ECO:0007669"/>
    <property type="project" value="UniProtKB-UniRule"/>
</dbReference>
<dbReference type="CDD" id="cd03699">
    <property type="entry name" value="EF4_II"/>
    <property type="match status" value="1"/>
</dbReference>
<dbReference type="CDD" id="cd16260">
    <property type="entry name" value="EF4_III"/>
    <property type="match status" value="1"/>
</dbReference>
<dbReference type="CDD" id="cd01890">
    <property type="entry name" value="LepA"/>
    <property type="match status" value="1"/>
</dbReference>
<dbReference type="CDD" id="cd03709">
    <property type="entry name" value="lepA_C"/>
    <property type="match status" value="1"/>
</dbReference>
<dbReference type="FunFam" id="3.40.50.300:FF:000078">
    <property type="entry name" value="Elongation factor 4"/>
    <property type="match status" value="1"/>
</dbReference>
<dbReference type="FunFam" id="2.40.30.10:FF:000015">
    <property type="entry name" value="Translation factor GUF1, mitochondrial"/>
    <property type="match status" value="1"/>
</dbReference>
<dbReference type="FunFam" id="3.30.70.240:FF:000007">
    <property type="entry name" value="Translation factor GUF1, mitochondrial"/>
    <property type="match status" value="1"/>
</dbReference>
<dbReference type="FunFam" id="3.30.70.2570:FF:000001">
    <property type="entry name" value="Translation factor GUF1, mitochondrial"/>
    <property type="match status" value="1"/>
</dbReference>
<dbReference type="FunFam" id="3.30.70.870:FF:000004">
    <property type="entry name" value="Translation factor GUF1, mitochondrial"/>
    <property type="match status" value="1"/>
</dbReference>
<dbReference type="Gene3D" id="3.30.70.240">
    <property type="match status" value="1"/>
</dbReference>
<dbReference type="Gene3D" id="3.30.70.2570">
    <property type="entry name" value="Elongation factor 4, C-terminal domain"/>
    <property type="match status" value="1"/>
</dbReference>
<dbReference type="Gene3D" id="3.30.70.870">
    <property type="entry name" value="Elongation Factor G (Translational Gtpase), domain 3"/>
    <property type="match status" value="1"/>
</dbReference>
<dbReference type="Gene3D" id="3.40.50.300">
    <property type="entry name" value="P-loop containing nucleotide triphosphate hydrolases"/>
    <property type="match status" value="1"/>
</dbReference>
<dbReference type="Gene3D" id="2.40.30.10">
    <property type="entry name" value="Translation factors"/>
    <property type="match status" value="1"/>
</dbReference>
<dbReference type="HAMAP" id="MF_00071">
    <property type="entry name" value="LepA"/>
    <property type="match status" value="1"/>
</dbReference>
<dbReference type="InterPro" id="IPR006297">
    <property type="entry name" value="EF-4"/>
</dbReference>
<dbReference type="InterPro" id="IPR035647">
    <property type="entry name" value="EFG_III/V"/>
</dbReference>
<dbReference type="InterPro" id="IPR000640">
    <property type="entry name" value="EFG_V-like"/>
</dbReference>
<dbReference type="InterPro" id="IPR004161">
    <property type="entry name" value="EFTu-like_2"/>
</dbReference>
<dbReference type="InterPro" id="IPR031157">
    <property type="entry name" value="G_TR_CS"/>
</dbReference>
<dbReference type="InterPro" id="IPR038363">
    <property type="entry name" value="LepA_C_sf"/>
</dbReference>
<dbReference type="InterPro" id="IPR013842">
    <property type="entry name" value="LepA_CTD"/>
</dbReference>
<dbReference type="InterPro" id="IPR035654">
    <property type="entry name" value="LepA_IV"/>
</dbReference>
<dbReference type="InterPro" id="IPR027417">
    <property type="entry name" value="P-loop_NTPase"/>
</dbReference>
<dbReference type="InterPro" id="IPR005225">
    <property type="entry name" value="Small_GTP-bd"/>
</dbReference>
<dbReference type="InterPro" id="IPR000795">
    <property type="entry name" value="T_Tr_GTP-bd_dom"/>
</dbReference>
<dbReference type="NCBIfam" id="TIGR01393">
    <property type="entry name" value="lepA"/>
    <property type="match status" value="1"/>
</dbReference>
<dbReference type="NCBIfam" id="TIGR00231">
    <property type="entry name" value="small_GTP"/>
    <property type="match status" value="1"/>
</dbReference>
<dbReference type="PANTHER" id="PTHR43512:SF4">
    <property type="entry name" value="TRANSLATION FACTOR GUF1 HOMOLOG, CHLOROPLASTIC"/>
    <property type="match status" value="1"/>
</dbReference>
<dbReference type="PANTHER" id="PTHR43512">
    <property type="entry name" value="TRANSLATION FACTOR GUF1-RELATED"/>
    <property type="match status" value="1"/>
</dbReference>
<dbReference type="Pfam" id="PF00679">
    <property type="entry name" value="EFG_C"/>
    <property type="match status" value="1"/>
</dbReference>
<dbReference type="Pfam" id="PF00009">
    <property type="entry name" value="GTP_EFTU"/>
    <property type="match status" value="1"/>
</dbReference>
<dbReference type="Pfam" id="PF03144">
    <property type="entry name" value="GTP_EFTU_D2"/>
    <property type="match status" value="1"/>
</dbReference>
<dbReference type="Pfam" id="PF06421">
    <property type="entry name" value="LepA_C"/>
    <property type="match status" value="1"/>
</dbReference>
<dbReference type="PRINTS" id="PR00315">
    <property type="entry name" value="ELONGATNFCT"/>
</dbReference>
<dbReference type="SMART" id="SM00838">
    <property type="entry name" value="EFG_C"/>
    <property type="match status" value="1"/>
</dbReference>
<dbReference type="SUPFAM" id="SSF54980">
    <property type="entry name" value="EF-G C-terminal domain-like"/>
    <property type="match status" value="2"/>
</dbReference>
<dbReference type="SUPFAM" id="SSF52540">
    <property type="entry name" value="P-loop containing nucleoside triphosphate hydrolases"/>
    <property type="match status" value="1"/>
</dbReference>
<dbReference type="PROSITE" id="PS00301">
    <property type="entry name" value="G_TR_1"/>
    <property type="match status" value="1"/>
</dbReference>
<dbReference type="PROSITE" id="PS51722">
    <property type="entry name" value="G_TR_2"/>
    <property type="match status" value="1"/>
</dbReference>
<proteinExistence type="inferred from homology"/>
<reference key="1">
    <citation type="submission" date="2008-10" db="EMBL/GenBank/DDBJ databases">
        <title>Genome sequence of Clostridium botulinum A2 Kyoto.</title>
        <authorList>
            <person name="Shrivastava S."/>
            <person name="Brinkac L.M."/>
            <person name="Brown J.L."/>
            <person name="Bruce D."/>
            <person name="Detter C.C."/>
            <person name="Johnson E.A."/>
            <person name="Munk C.A."/>
            <person name="Smith L.A."/>
            <person name="Smith T.J."/>
            <person name="Sutton G."/>
            <person name="Brettin T.S."/>
        </authorList>
    </citation>
    <scope>NUCLEOTIDE SEQUENCE [LARGE SCALE GENOMIC DNA]</scope>
    <source>
        <strain>Kyoto / Type A2</strain>
    </source>
</reference>
<sequence length="602" mass="67085">MQSGRQKYIRNFSIVAHIDHGKSTLADRLIEATGTLTEREMDTQVLDNMDLEKERGITIKSQAVRLIYKRNTGEEYTLNLIDTPGHVDFNYEVSRSLAACEGAILVVDATQGIQAQTLANCYLALDNDLEIVPVINKIDLPSARPEEVKQEIEDVIGIEAEDAPLVSAKTGLNIKDALEAIVNKVPAPDGDEKAPLKALIFDSYYDSYKGVVCHIRVKEGAIKEGTEIKLMNTGKVYEVVEVGVFVPNYMPVDELKAGDVGYVTASIKNVRDARVGDTITEAKRSANEALSGYRPAVPMVFSGIYPVDGAKYEELKEALEKLQVNDAALSFEPETSIALGFGFRCGFLGLLHMDIIQERLEREFNLDIITTAPSVIYKITKTDGTLIELTNPTNMPSPSEIKLMEEPIVKSSIITPSDYVGAVMDLAQNRRGIFKDMQYLDTTRVSLNYEIPLNEIIYDFFDALKSRTRGYASFDYELIGYKDADLVKLDILLNADVVDALSMIVPRERAYAKGRNMAQKLKEIIPRQMFEIPIQAAVGAKIIARETIKAMRKDVLAKCYGGDISRKRKLLEKQKEGKKRMRQVGSVEVPQEAFMAVLKTEE</sequence>
<gene>
    <name evidence="1" type="primary">lepA</name>
    <name type="ordered locus">CLM_3358</name>
</gene>
<keyword id="KW-1003">Cell membrane</keyword>
<keyword id="KW-0342">GTP-binding</keyword>
<keyword id="KW-0378">Hydrolase</keyword>
<keyword id="KW-0472">Membrane</keyword>
<keyword id="KW-0547">Nucleotide-binding</keyword>
<keyword id="KW-0648">Protein biosynthesis</keyword>
<protein>
    <recommendedName>
        <fullName evidence="1">Elongation factor 4</fullName>
        <shortName evidence="1">EF-4</shortName>
        <ecNumber evidence="1">3.6.5.n1</ecNumber>
    </recommendedName>
    <alternativeName>
        <fullName evidence="1">Ribosomal back-translocase LepA</fullName>
    </alternativeName>
</protein>
<organism>
    <name type="scientific">Clostridium botulinum (strain Kyoto / Type A2)</name>
    <dbReference type="NCBI Taxonomy" id="536232"/>
    <lineage>
        <taxon>Bacteria</taxon>
        <taxon>Bacillati</taxon>
        <taxon>Bacillota</taxon>
        <taxon>Clostridia</taxon>
        <taxon>Eubacteriales</taxon>
        <taxon>Clostridiaceae</taxon>
        <taxon>Clostridium</taxon>
    </lineage>
</organism>
<feature type="chain" id="PRO_1000118044" description="Elongation factor 4">
    <location>
        <begin position="1"/>
        <end position="602"/>
    </location>
</feature>
<feature type="domain" description="tr-type G">
    <location>
        <begin position="7"/>
        <end position="189"/>
    </location>
</feature>
<feature type="binding site" evidence="1">
    <location>
        <begin position="19"/>
        <end position="24"/>
    </location>
    <ligand>
        <name>GTP</name>
        <dbReference type="ChEBI" id="CHEBI:37565"/>
    </ligand>
</feature>
<feature type="binding site" evidence="1">
    <location>
        <begin position="136"/>
        <end position="139"/>
    </location>
    <ligand>
        <name>GTP</name>
        <dbReference type="ChEBI" id="CHEBI:37565"/>
    </ligand>
</feature>
<comment type="function">
    <text evidence="1">Required for accurate and efficient protein synthesis under certain stress conditions. May act as a fidelity factor of the translation reaction, by catalyzing a one-codon backward translocation of tRNAs on improperly translocated ribosomes. Back-translocation proceeds from a post-translocation (POST) complex to a pre-translocation (PRE) complex, thus giving elongation factor G a second chance to translocate the tRNAs correctly. Binds to ribosomes in a GTP-dependent manner.</text>
</comment>
<comment type="catalytic activity">
    <reaction evidence="1">
        <text>GTP + H2O = GDP + phosphate + H(+)</text>
        <dbReference type="Rhea" id="RHEA:19669"/>
        <dbReference type="ChEBI" id="CHEBI:15377"/>
        <dbReference type="ChEBI" id="CHEBI:15378"/>
        <dbReference type="ChEBI" id="CHEBI:37565"/>
        <dbReference type="ChEBI" id="CHEBI:43474"/>
        <dbReference type="ChEBI" id="CHEBI:58189"/>
        <dbReference type="EC" id="3.6.5.n1"/>
    </reaction>
</comment>
<comment type="subcellular location">
    <subcellularLocation>
        <location evidence="1">Cell membrane</location>
        <topology evidence="1">Peripheral membrane protein</topology>
        <orientation evidence="1">Cytoplasmic side</orientation>
    </subcellularLocation>
</comment>
<comment type="similarity">
    <text evidence="1">Belongs to the TRAFAC class translation factor GTPase superfamily. Classic translation factor GTPase family. LepA subfamily.</text>
</comment>
<name>LEPA_CLOBJ</name>
<evidence type="ECO:0000255" key="1">
    <source>
        <dbReference type="HAMAP-Rule" id="MF_00071"/>
    </source>
</evidence>